<keyword id="KW-1185">Reference proteome</keyword>
<sequence>MELTLHEARVIGCLLEKEVTTPEQYPLSLNALTLACNQKTSREPVLELTEAQVQDALDSLNKKRLISEQSGFGSRVVKYKHRFCNTEFSELQLSTAAVAIVCLLLLRGPQTPGELRTRSNRLHDFKDVLEVEACIKQLMERDKPVLTQLPREPGKRECRYTELFSQGSEQVSATSLSADSPSADSNSLNAQDRQQLEARVTQLEGQVAELKDKLESLIASLS</sequence>
<dbReference type="EMBL" id="AE014299">
    <property type="protein sequence ID" value="AAN54919.1"/>
    <property type="molecule type" value="Genomic_DNA"/>
</dbReference>
<dbReference type="RefSeq" id="NP_717475.1">
    <property type="nucleotide sequence ID" value="NC_004347.2"/>
</dbReference>
<dbReference type="RefSeq" id="WP_011071979.1">
    <property type="nucleotide sequence ID" value="NC_004347.2"/>
</dbReference>
<dbReference type="SMR" id="Q8EFU8"/>
<dbReference type="STRING" id="211586.SO_1867"/>
<dbReference type="PaxDb" id="211586-SO_1867"/>
<dbReference type="KEGG" id="son:SO_1867"/>
<dbReference type="PATRIC" id="fig|211586.12.peg.1795"/>
<dbReference type="eggNOG" id="COG3132">
    <property type="taxonomic scope" value="Bacteria"/>
</dbReference>
<dbReference type="HOGENOM" id="CLU_057831_2_0_6"/>
<dbReference type="OrthoDB" id="9784785at2"/>
<dbReference type="PhylomeDB" id="Q8EFU8"/>
<dbReference type="BioCyc" id="SONE211586:G1GMP-1723-MONOMER"/>
<dbReference type="Proteomes" id="UP000008186">
    <property type="component" value="Chromosome"/>
</dbReference>
<dbReference type="Gene3D" id="1.10.10.10">
    <property type="entry name" value="Winged helix-like DNA-binding domain superfamily/Winged helix DNA-binding domain"/>
    <property type="match status" value="2"/>
</dbReference>
<dbReference type="HAMAP" id="MF_01584">
    <property type="entry name" value="UPF0502"/>
    <property type="match status" value="1"/>
</dbReference>
<dbReference type="InterPro" id="IPR007432">
    <property type="entry name" value="DUF480"/>
</dbReference>
<dbReference type="InterPro" id="IPR036388">
    <property type="entry name" value="WH-like_DNA-bd_sf"/>
</dbReference>
<dbReference type="InterPro" id="IPR036390">
    <property type="entry name" value="WH_DNA-bd_sf"/>
</dbReference>
<dbReference type="PANTHER" id="PTHR38768">
    <property type="entry name" value="UPF0502 PROTEIN YCEH"/>
    <property type="match status" value="1"/>
</dbReference>
<dbReference type="PANTHER" id="PTHR38768:SF1">
    <property type="entry name" value="UPF0502 PROTEIN YCEH"/>
    <property type="match status" value="1"/>
</dbReference>
<dbReference type="Pfam" id="PF04337">
    <property type="entry name" value="DUF480"/>
    <property type="match status" value="1"/>
</dbReference>
<dbReference type="SUPFAM" id="SSF46785">
    <property type="entry name" value="Winged helix' DNA-binding domain"/>
    <property type="match status" value="2"/>
</dbReference>
<gene>
    <name type="ordered locus">SO_1867</name>
</gene>
<organism>
    <name type="scientific">Shewanella oneidensis (strain ATCC 700550 / JCM 31522 / CIP 106686 / LMG 19005 / NCIMB 14063 / MR-1)</name>
    <dbReference type="NCBI Taxonomy" id="211586"/>
    <lineage>
        <taxon>Bacteria</taxon>
        <taxon>Pseudomonadati</taxon>
        <taxon>Pseudomonadota</taxon>
        <taxon>Gammaproteobacteria</taxon>
        <taxon>Alteromonadales</taxon>
        <taxon>Shewanellaceae</taxon>
        <taxon>Shewanella</taxon>
    </lineage>
</organism>
<reference key="1">
    <citation type="journal article" date="2002" name="Nat. Biotechnol.">
        <title>Genome sequence of the dissimilatory metal ion-reducing bacterium Shewanella oneidensis.</title>
        <authorList>
            <person name="Heidelberg J.F."/>
            <person name="Paulsen I.T."/>
            <person name="Nelson K.E."/>
            <person name="Gaidos E.J."/>
            <person name="Nelson W.C."/>
            <person name="Read T.D."/>
            <person name="Eisen J.A."/>
            <person name="Seshadri R."/>
            <person name="Ward N.L."/>
            <person name="Methe B.A."/>
            <person name="Clayton R.A."/>
            <person name="Meyer T."/>
            <person name="Tsapin A."/>
            <person name="Scott J."/>
            <person name="Beanan M.J."/>
            <person name="Brinkac L.M."/>
            <person name="Daugherty S.C."/>
            <person name="DeBoy R.T."/>
            <person name="Dodson R.J."/>
            <person name="Durkin A.S."/>
            <person name="Haft D.H."/>
            <person name="Kolonay J.F."/>
            <person name="Madupu R."/>
            <person name="Peterson J.D."/>
            <person name="Umayam L.A."/>
            <person name="White O."/>
            <person name="Wolf A.M."/>
            <person name="Vamathevan J.J."/>
            <person name="Weidman J.F."/>
            <person name="Impraim M."/>
            <person name="Lee K."/>
            <person name="Berry K.J."/>
            <person name="Lee C."/>
            <person name="Mueller J."/>
            <person name="Khouri H.M."/>
            <person name="Gill J."/>
            <person name="Utterback T.R."/>
            <person name="McDonald L.A."/>
            <person name="Feldblyum T.V."/>
            <person name="Smith H.O."/>
            <person name="Venter J.C."/>
            <person name="Nealson K.H."/>
            <person name="Fraser C.M."/>
        </authorList>
    </citation>
    <scope>NUCLEOTIDE SEQUENCE [LARGE SCALE GENOMIC DNA]</scope>
    <source>
        <strain>ATCC 700550 / JCM 31522 / CIP 106686 / LMG 19005 / NCIMB 14063 / MR-1</strain>
    </source>
</reference>
<feature type="chain" id="PRO_0000309427" description="UPF0502 protein SO_1867">
    <location>
        <begin position="1"/>
        <end position="222"/>
    </location>
</feature>
<feature type="region of interest" description="Disordered" evidence="2">
    <location>
        <begin position="169"/>
        <end position="195"/>
    </location>
</feature>
<feature type="compositionally biased region" description="Polar residues" evidence="2">
    <location>
        <begin position="169"/>
        <end position="193"/>
    </location>
</feature>
<comment type="similarity">
    <text evidence="1">Belongs to the UPF0502 family.</text>
</comment>
<protein>
    <recommendedName>
        <fullName evidence="1">UPF0502 protein SO_1867</fullName>
    </recommendedName>
</protein>
<proteinExistence type="inferred from homology"/>
<accession>Q8EFU8</accession>
<evidence type="ECO:0000255" key="1">
    <source>
        <dbReference type="HAMAP-Rule" id="MF_01584"/>
    </source>
</evidence>
<evidence type="ECO:0000256" key="2">
    <source>
        <dbReference type="SAM" id="MobiDB-lite"/>
    </source>
</evidence>
<name>Y1867_SHEON</name>